<proteinExistence type="inferred from homology"/>
<evidence type="ECO:0000255" key="1">
    <source>
        <dbReference type="HAMAP-Rule" id="MF_00696"/>
    </source>
</evidence>
<comment type="function">
    <text evidence="1">Multifunctional regulator of fatty acid metabolism.</text>
</comment>
<comment type="subunit">
    <text evidence="1">Homodimer.</text>
</comment>
<comment type="subcellular location">
    <subcellularLocation>
        <location evidence="1">Cytoplasm</location>
    </subcellularLocation>
</comment>
<organism>
    <name type="scientific">Salmonella gallinarum (strain 287/91 / NCTC 13346)</name>
    <dbReference type="NCBI Taxonomy" id="550538"/>
    <lineage>
        <taxon>Bacteria</taxon>
        <taxon>Pseudomonadati</taxon>
        <taxon>Pseudomonadota</taxon>
        <taxon>Gammaproteobacteria</taxon>
        <taxon>Enterobacterales</taxon>
        <taxon>Enterobacteriaceae</taxon>
        <taxon>Salmonella</taxon>
    </lineage>
</organism>
<protein>
    <recommendedName>
        <fullName evidence="1">Fatty acid metabolism regulator protein</fullName>
    </recommendedName>
</protein>
<name>FADR_SALG2</name>
<gene>
    <name evidence="1" type="primary">fadR</name>
    <name type="ordered locus">SG1312</name>
</gene>
<accession>B5R8Z6</accession>
<keyword id="KW-0010">Activator</keyword>
<keyword id="KW-0963">Cytoplasm</keyword>
<keyword id="KW-0238">DNA-binding</keyword>
<keyword id="KW-0276">Fatty acid metabolism</keyword>
<keyword id="KW-0443">Lipid metabolism</keyword>
<keyword id="KW-0678">Repressor</keyword>
<keyword id="KW-0804">Transcription</keyword>
<keyword id="KW-0805">Transcription regulation</keyword>
<feature type="chain" id="PRO_1000132327" description="Fatty acid metabolism regulator protein">
    <location>
        <begin position="1"/>
        <end position="239"/>
    </location>
</feature>
<feature type="domain" description="HTH gntR-type" evidence="1">
    <location>
        <begin position="6"/>
        <end position="74"/>
    </location>
</feature>
<feature type="DNA-binding region" description="H-T-H motif" evidence="1">
    <location>
        <begin position="34"/>
        <end position="53"/>
    </location>
</feature>
<reference key="1">
    <citation type="journal article" date="2008" name="Genome Res.">
        <title>Comparative genome analysis of Salmonella enteritidis PT4 and Salmonella gallinarum 287/91 provides insights into evolutionary and host adaptation pathways.</title>
        <authorList>
            <person name="Thomson N.R."/>
            <person name="Clayton D.J."/>
            <person name="Windhorst D."/>
            <person name="Vernikos G."/>
            <person name="Davidson S."/>
            <person name="Churcher C."/>
            <person name="Quail M.A."/>
            <person name="Stevens M."/>
            <person name="Jones M.A."/>
            <person name="Watson M."/>
            <person name="Barron A."/>
            <person name="Layton A."/>
            <person name="Pickard D."/>
            <person name="Kingsley R.A."/>
            <person name="Bignell A."/>
            <person name="Clark L."/>
            <person name="Harris B."/>
            <person name="Ormond D."/>
            <person name="Abdellah Z."/>
            <person name="Brooks K."/>
            <person name="Cherevach I."/>
            <person name="Chillingworth T."/>
            <person name="Woodward J."/>
            <person name="Norberczak H."/>
            <person name="Lord A."/>
            <person name="Arrowsmith C."/>
            <person name="Jagels K."/>
            <person name="Moule S."/>
            <person name="Mungall K."/>
            <person name="Saunders M."/>
            <person name="Whitehead S."/>
            <person name="Chabalgoity J.A."/>
            <person name="Maskell D."/>
            <person name="Humphreys T."/>
            <person name="Roberts M."/>
            <person name="Barrow P.A."/>
            <person name="Dougan G."/>
            <person name="Parkhill J."/>
        </authorList>
    </citation>
    <scope>NUCLEOTIDE SEQUENCE [LARGE SCALE GENOMIC DNA]</scope>
    <source>
        <strain>287/91 / NCTC 13346</strain>
    </source>
</reference>
<dbReference type="EMBL" id="AM933173">
    <property type="protein sequence ID" value="CAR37189.1"/>
    <property type="molecule type" value="Genomic_DNA"/>
</dbReference>
<dbReference type="RefSeq" id="WP_000234826.1">
    <property type="nucleotide sequence ID" value="NC_011274.1"/>
</dbReference>
<dbReference type="SMR" id="B5R8Z6"/>
<dbReference type="KEGG" id="seg:SG1312"/>
<dbReference type="HOGENOM" id="CLU_017584_9_4_6"/>
<dbReference type="Proteomes" id="UP000008321">
    <property type="component" value="Chromosome"/>
</dbReference>
<dbReference type="GO" id="GO:0005737">
    <property type="term" value="C:cytoplasm"/>
    <property type="evidence" value="ECO:0007669"/>
    <property type="project" value="UniProtKB-SubCell"/>
</dbReference>
<dbReference type="GO" id="GO:0003677">
    <property type="term" value="F:DNA binding"/>
    <property type="evidence" value="ECO:0007669"/>
    <property type="project" value="UniProtKB-KW"/>
</dbReference>
<dbReference type="GO" id="GO:0003700">
    <property type="term" value="F:DNA-binding transcription factor activity"/>
    <property type="evidence" value="ECO:0007669"/>
    <property type="project" value="UniProtKB-UniRule"/>
</dbReference>
<dbReference type="GO" id="GO:0000062">
    <property type="term" value="F:fatty-acyl-CoA binding"/>
    <property type="evidence" value="ECO:0007669"/>
    <property type="project" value="InterPro"/>
</dbReference>
<dbReference type="GO" id="GO:0006631">
    <property type="term" value="P:fatty acid metabolic process"/>
    <property type="evidence" value="ECO:0007669"/>
    <property type="project" value="UniProtKB-KW"/>
</dbReference>
<dbReference type="GO" id="GO:0019217">
    <property type="term" value="P:regulation of fatty acid metabolic process"/>
    <property type="evidence" value="ECO:0007669"/>
    <property type="project" value="UniProtKB-UniRule"/>
</dbReference>
<dbReference type="CDD" id="cd07377">
    <property type="entry name" value="WHTH_GntR"/>
    <property type="match status" value="1"/>
</dbReference>
<dbReference type="FunFam" id="1.10.10.10:FF:000036">
    <property type="entry name" value="Fatty acid metabolism regulator protein"/>
    <property type="match status" value="1"/>
</dbReference>
<dbReference type="FunFam" id="1.20.120.530:FF:000003">
    <property type="entry name" value="Fatty acid metabolism regulator protein"/>
    <property type="match status" value="1"/>
</dbReference>
<dbReference type="Gene3D" id="1.20.120.530">
    <property type="entry name" value="GntR ligand-binding domain-like"/>
    <property type="match status" value="1"/>
</dbReference>
<dbReference type="Gene3D" id="1.10.10.10">
    <property type="entry name" value="Winged helix-like DNA-binding domain superfamily/Winged helix DNA-binding domain"/>
    <property type="match status" value="1"/>
</dbReference>
<dbReference type="HAMAP" id="MF_00696">
    <property type="entry name" value="HTH_FadR"/>
    <property type="match status" value="1"/>
</dbReference>
<dbReference type="InterPro" id="IPR014178">
    <property type="entry name" value="FA-response_TF_FadR"/>
</dbReference>
<dbReference type="InterPro" id="IPR028374">
    <property type="entry name" value="FadR_C"/>
</dbReference>
<dbReference type="InterPro" id="IPR008920">
    <property type="entry name" value="TF_FadR/GntR_C"/>
</dbReference>
<dbReference type="InterPro" id="IPR000524">
    <property type="entry name" value="Tscrpt_reg_HTH_GntR"/>
</dbReference>
<dbReference type="InterPro" id="IPR036388">
    <property type="entry name" value="WH-like_DNA-bd_sf"/>
</dbReference>
<dbReference type="InterPro" id="IPR036390">
    <property type="entry name" value="WH_DNA-bd_sf"/>
</dbReference>
<dbReference type="NCBIfam" id="TIGR02812">
    <property type="entry name" value="fadR_gamma"/>
    <property type="match status" value="1"/>
</dbReference>
<dbReference type="NCBIfam" id="NF003444">
    <property type="entry name" value="PRK04984.1"/>
    <property type="match status" value="1"/>
</dbReference>
<dbReference type="PANTHER" id="PTHR43537:SF52">
    <property type="entry name" value="FATTY ACID METABOLISM REGULATOR PROTEIN"/>
    <property type="match status" value="1"/>
</dbReference>
<dbReference type="PANTHER" id="PTHR43537">
    <property type="entry name" value="TRANSCRIPTIONAL REGULATOR, GNTR FAMILY"/>
    <property type="match status" value="1"/>
</dbReference>
<dbReference type="Pfam" id="PF07840">
    <property type="entry name" value="FadR_C"/>
    <property type="match status" value="1"/>
</dbReference>
<dbReference type="Pfam" id="PF00392">
    <property type="entry name" value="GntR"/>
    <property type="match status" value="1"/>
</dbReference>
<dbReference type="PRINTS" id="PR00035">
    <property type="entry name" value="HTHGNTR"/>
</dbReference>
<dbReference type="SMART" id="SM00345">
    <property type="entry name" value="HTH_GNTR"/>
    <property type="match status" value="1"/>
</dbReference>
<dbReference type="SUPFAM" id="SSF48008">
    <property type="entry name" value="GntR ligand-binding domain-like"/>
    <property type="match status" value="1"/>
</dbReference>
<dbReference type="SUPFAM" id="SSF46785">
    <property type="entry name" value="Winged helix' DNA-binding domain"/>
    <property type="match status" value="1"/>
</dbReference>
<dbReference type="PROSITE" id="PS50949">
    <property type="entry name" value="HTH_GNTR"/>
    <property type="match status" value="1"/>
</dbReference>
<sequence length="239" mass="26987">MVIKAQSPAGFAEEYIIESIWNNRFPPGTILPAERELSELIGVTRTTLREVLQRLARDGWLTIQHGKPTKVNNFWETSGLNILETLARLDHESVPQLIDNLLSVRTNISTIFIRTALRQHPDKAQEVLATAHEVADHADAFADLDYNIFRGLAFASGNPIYGLILNGMKGLYTRIGRHYFANPEARSLALGFYHKLSSLCEQGAHDQVYETVRRYGHDSGEIWHRMQKNLPGDLAIQGR</sequence>